<organism>
    <name type="scientific">Mycoplasma genitalium (strain ATCC 33530 / DSM 19775 / NCTC 10195 / G37)</name>
    <name type="common">Mycoplasmoides genitalium</name>
    <dbReference type="NCBI Taxonomy" id="243273"/>
    <lineage>
        <taxon>Bacteria</taxon>
        <taxon>Bacillati</taxon>
        <taxon>Mycoplasmatota</taxon>
        <taxon>Mycoplasmoidales</taxon>
        <taxon>Mycoplasmoidaceae</taxon>
        <taxon>Mycoplasmoides</taxon>
    </lineage>
</organism>
<feature type="chain" id="PRO_0000210551" description="Uncharacterized protein MG343">
    <location>
        <begin position="1"/>
        <end position="346"/>
    </location>
</feature>
<accession>P47585</accession>
<name>Y343_MYCGE</name>
<reference key="1">
    <citation type="journal article" date="1995" name="Science">
        <title>The minimal gene complement of Mycoplasma genitalium.</title>
        <authorList>
            <person name="Fraser C.M."/>
            <person name="Gocayne J.D."/>
            <person name="White O."/>
            <person name="Adams M.D."/>
            <person name="Clayton R.A."/>
            <person name="Fleischmann R.D."/>
            <person name="Bult C.J."/>
            <person name="Kerlavage A.R."/>
            <person name="Sutton G.G."/>
            <person name="Kelley J.M."/>
            <person name="Fritchman J.L."/>
            <person name="Weidman J.F."/>
            <person name="Small K.V."/>
            <person name="Sandusky M."/>
            <person name="Fuhrmann J.L."/>
            <person name="Nguyen D.T."/>
            <person name="Utterback T.R."/>
            <person name="Saudek D.M."/>
            <person name="Phillips C.A."/>
            <person name="Merrick J.M."/>
            <person name="Tomb J.-F."/>
            <person name="Dougherty B.A."/>
            <person name="Bott K.F."/>
            <person name="Hu P.-C."/>
            <person name="Lucier T.S."/>
            <person name="Peterson S.N."/>
            <person name="Smith H.O."/>
            <person name="Hutchison C.A. III"/>
            <person name="Venter J.C."/>
        </authorList>
    </citation>
    <scope>NUCLEOTIDE SEQUENCE [LARGE SCALE GENOMIC DNA]</scope>
    <source>
        <strain>ATCC 33530 / DSM 19775 / NCTC 10195 / G37</strain>
    </source>
</reference>
<reference key="2">
    <citation type="journal article" date="1993" name="J. Bacteriol.">
        <title>A survey of the Mycoplasma genitalium genome by using random sequencing.</title>
        <authorList>
            <person name="Peterson S.N."/>
            <person name="Hu P.-C."/>
            <person name="Bott K.F."/>
            <person name="Hutchison C.A. III"/>
        </authorList>
    </citation>
    <scope>NUCLEOTIDE SEQUENCE [GENOMIC DNA] OF 37-150</scope>
    <source>
        <strain>ATCC 33530 / DSM 19775 / NCTC 10195 / G37</strain>
    </source>
</reference>
<sequence length="346" mass="40834">MSHKINDQTLVNEQRLLAYDFFQNSNKVGLLSTLQYLDFVNFLVRSKKVNYLLVNKVSLPIYQKIYFDNFPFLGFDNNLWSAFGLALRNKSQNDTVFAFVEKTKNTDTEINKFLKILKTFKGLKIVFLLINSPEEKTTIKLSDSLIKEIKKQKIKHEVYSLRSFQNKFFKLVRKLEKKHKSKNNVMFVELNGVFGYETNFEKSNIDFSFTSFQDRFTIEKKLKITSHFILPHKYLLKNLENIKHPNFEQKNLIWQQTVKDFNQQFLLHYSKLQVFSNSPTKLKVDALIFDLEFHLIVEIMKGFNFDENCICLLEGNKEQNPNLPTVSLDTKVADIKTYQGCYFLNN</sequence>
<dbReference type="EMBL" id="L43967">
    <property type="protein sequence ID" value="AAC71568.1"/>
    <property type="molecule type" value="Genomic_DNA"/>
</dbReference>
<dbReference type="EMBL" id="U01811">
    <property type="protein sequence ID" value="AAD12345.1"/>
    <property type="molecule type" value="Genomic_DNA"/>
</dbReference>
<dbReference type="PIR" id="I64237">
    <property type="entry name" value="I64237"/>
</dbReference>
<dbReference type="RefSeq" id="WP_010869442.1">
    <property type="nucleotide sequence ID" value="NC_000908.2"/>
</dbReference>
<dbReference type="SMR" id="P47585"/>
<dbReference type="STRING" id="243273.MG_343"/>
<dbReference type="GeneID" id="88282520"/>
<dbReference type="KEGG" id="mge:MG_343"/>
<dbReference type="HOGENOM" id="CLU_801262_0_0_14"/>
<dbReference type="InParanoid" id="P47585"/>
<dbReference type="OrthoDB" id="9957900at2"/>
<dbReference type="BioCyc" id="MGEN243273:G1GJ2-430-MONOMER"/>
<dbReference type="Proteomes" id="UP000000807">
    <property type="component" value="Chromosome"/>
</dbReference>
<protein>
    <recommendedName>
        <fullName>Uncharacterized protein MG343</fullName>
    </recommendedName>
</protein>
<gene>
    <name type="ordered locus">MG343</name>
</gene>
<proteinExistence type="predicted"/>
<keyword id="KW-1185">Reference proteome</keyword>